<name>RHO1_CAEEL</name>
<dbReference type="EMBL" id="L36965">
    <property type="protein sequence ID" value="AAC37216.1"/>
    <property type="molecule type" value="mRNA"/>
</dbReference>
<dbReference type="EMBL" id="AL132952">
    <property type="protein sequence ID" value="CAB63379.1"/>
    <property type="molecule type" value="Genomic_DNA"/>
</dbReference>
<dbReference type="PIR" id="A55492">
    <property type="entry name" value="A55492"/>
</dbReference>
<dbReference type="RefSeq" id="NP_502959.1">
    <property type="nucleotide sequence ID" value="NM_070558.9"/>
</dbReference>
<dbReference type="SMR" id="Q22038"/>
<dbReference type="BioGRID" id="43536">
    <property type="interactions" value="25"/>
</dbReference>
<dbReference type="FunCoup" id="Q22038">
    <property type="interactions" value="2154"/>
</dbReference>
<dbReference type="IntAct" id="Q22038">
    <property type="interactions" value="2"/>
</dbReference>
<dbReference type="MINT" id="Q22038"/>
<dbReference type="STRING" id="6239.Y51H4A.3a.1"/>
<dbReference type="PaxDb" id="6239-Y51H4A.3"/>
<dbReference type="PeptideAtlas" id="Q22038"/>
<dbReference type="EnsemblMetazoa" id="Y51H4A.3a.1">
    <property type="protein sequence ID" value="Y51H4A.3a.1"/>
    <property type="gene ID" value="WBGene00004357"/>
</dbReference>
<dbReference type="GeneID" id="178458"/>
<dbReference type="KEGG" id="cel:CELE_Y51H4A.3"/>
<dbReference type="UCSC" id="Y51H4A.3">
    <property type="organism name" value="c. elegans"/>
</dbReference>
<dbReference type="AGR" id="WB:WBGene00004357"/>
<dbReference type="CTD" id="178458"/>
<dbReference type="WormBase" id="Y51H4A.3a">
    <property type="protein sequence ID" value="CE25369"/>
    <property type="gene ID" value="WBGene00004357"/>
    <property type="gene designation" value="rho-1"/>
</dbReference>
<dbReference type="eggNOG" id="KOG0393">
    <property type="taxonomic scope" value="Eukaryota"/>
</dbReference>
<dbReference type="GeneTree" id="ENSGT00940000163656"/>
<dbReference type="HOGENOM" id="CLU_041217_21_2_1"/>
<dbReference type="InParanoid" id="Q22038"/>
<dbReference type="OMA" id="EERPQMA"/>
<dbReference type="OrthoDB" id="8830751at2759"/>
<dbReference type="PhylomeDB" id="Q22038"/>
<dbReference type="Reactome" id="R-CEL-114604">
    <property type="pathway name" value="GPVI-mediated activation cascade"/>
</dbReference>
<dbReference type="Reactome" id="R-CEL-193634">
    <property type="pathway name" value="Axonal growth inhibition (RHOA activation)"/>
</dbReference>
<dbReference type="Reactome" id="R-CEL-198203">
    <property type="pathway name" value="PI3K/AKT activation"/>
</dbReference>
<dbReference type="Reactome" id="R-CEL-2173791">
    <property type="pathway name" value="TGF-beta receptor signaling in EMT (epithelial to mesenchymal transition)"/>
</dbReference>
<dbReference type="Reactome" id="R-CEL-392451">
    <property type="pathway name" value="G beta:gamma signalling through PI3Kgamma"/>
</dbReference>
<dbReference type="Reactome" id="R-CEL-3928662">
    <property type="pathway name" value="EPHB-mediated forward signaling"/>
</dbReference>
<dbReference type="Reactome" id="R-CEL-3928663">
    <property type="pathway name" value="EPHA-mediated growth cone collapse"/>
</dbReference>
<dbReference type="Reactome" id="R-CEL-4086400">
    <property type="pathway name" value="PCP/CE pathway"/>
</dbReference>
<dbReference type="Reactome" id="R-CEL-416482">
    <property type="pathway name" value="G alpha (12/13) signalling events"/>
</dbReference>
<dbReference type="Reactome" id="R-CEL-416550">
    <property type="pathway name" value="Sema4D mediated inhibition of cell attachment and migration"/>
</dbReference>
<dbReference type="Reactome" id="R-CEL-416572">
    <property type="pathway name" value="Sema4D induced cell migration and growth-cone collapse"/>
</dbReference>
<dbReference type="Reactome" id="R-CEL-4420097">
    <property type="pathway name" value="VEGFA-VEGFR2 Pathway"/>
</dbReference>
<dbReference type="Reactome" id="R-CEL-5625740">
    <property type="pathway name" value="RHO GTPases activate PKNs"/>
</dbReference>
<dbReference type="Reactome" id="R-CEL-5627117">
    <property type="pathway name" value="RHO GTPases Activate ROCKs"/>
</dbReference>
<dbReference type="Reactome" id="R-CEL-5663220">
    <property type="pathway name" value="RHO GTPases Activate Formins"/>
</dbReference>
<dbReference type="Reactome" id="R-CEL-5666185">
    <property type="pathway name" value="RHO GTPases Activate Rhotekin and Rhophilins"/>
</dbReference>
<dbReference type="Reactome" id="R-CEL-5689896">
    <property type="pathway name" value="Ovarian tumor domain proteases"/>
</dbReference>
<dbReference type="Reactome" id="R-CEL-6785631">
    <property type="pathway name" value="ERBB2 Regulates Cell Motility"/>
</dbReference>
<dbReference type="Reactome" id="R-CEL-6798695">
    <property type="pathway name" value="Neutrophil degranulation"/>
</dbReference>
<dbReference type="Reactome" id="R-CEL-8849471">
    <property type="pathway name" value="PTK6 Regulates RHO GTPases, RAS GTPase and MAP kinases"/>
</dbReference>
<dbReference type="Reactome" id="R-CEL-8980692">
    <property type="pathway name" value="RHOA GTPase cycle"/>
</dbReference>
<dbReference type="Reactome" id="R-CEL-8985586">
    <property type="pathway name" value="SLIT2:ROBO1 increases RHOA activity"/>
</dbReference>
<dbReference type="Reactome" id="R-CEL-9013026">
    <property type="pathway name" value="RHOB GTPase cycle"/>
</dbReference>
<dbReference type="Reactome" id="R-CEL-9013405">
    <property type="pathway name" value="RHOD GTPase cycle"/>
</dbReference>
<dbReference type="Reactome" id="R-CEL-9035034">
    <property type="pathway name" value="RHOF GTPase cycle"/>
</dbReference>
<dbReference type="SignaLink" id="Q22038"/>
<dbReference type="PRO" id="PR:Q22038"/>
<dbReference type="Proteomes" id="UP000001940">
    <property type="component" value="Chromosome IV"/>
</dbReference>
<dbReference type="Bgee" id="WBGene00004357">
    <property type="expression patterns" value="Expressed in pharyngeal muscle cell (C elegans) and 4 other cell types or tissues"/>
</dbReference>
<dbReference type="GO" id="GO:0005938">
    <property type="term" value="C:cell cortex"/>
    <property type="evidence" value="ECO:0000314"/>
    <property type="project" value="WormBase"/>
</dbReference>
<dbReference type="GO" id="GO:0032154">
    <property type="term" value="C:cleavage furrow"/>
    <property type="evidence" value="ECO:0000314"/>
    <property type="project" value="WormBase"/>
</dbReference>
<dbReference type="GO" id="GO:0005856">
    <property type="term" value="C:cytoskeleton"/>
    <property type="evidence" value="ECO:0007669"/>
    <property type="project" value="UniProtKB-SubCell"/>
</dbReference>
<dbReference type="GO" id="GO:0005829">
    <property type="term" value="C:cytosol"/>
    <property type="evidence" value="ECO:0000318"/>
    <property type="project" value="GO_Central"/>
</dbReference>
<dbReference type="GO" id="GO:0005886">
    <property type="term" value="C:plasma membrane"/>
    <property type="evidence" value="ECO:0000318"/>
    <property type="project" value="GO_Central"/>
</dbReference>
<dbReference type="GO" id="GO:0005525">
    <property type="term" value="F:GTP binding"/>
    <property type="evidence" value="ECO:0000314"/>
    <property type="project" value="WormBase"/>
</dbReference>
<dbReference type="GO" id="GO:0032794">
    <property type="term" value="F:GTPase activating protein binding"/>
    <property type="evidence" value="ECO:0000353"/>
    <property type="project" value="WormBase"/>
</dbReference>
<dbReference type="GO" id="GO:0003924">
    <property type="term" value="F:GTPase activity"/>
    <property type="evidence" value="ECO:0000314"/>
    <property type="project" value="WormBase"/>
</dbReference>
<dbReference type="GO" id="GO:0019901">
    <property type="term" value="F:protein kinase binding"/>
    <property type="evidence" value="ECO:0000353"/>
    <property type="project" value="WormBase"/>
</dbReference>
<dbReference type="GO" id="GO:0007015">
    <property type="term" value="P:actin filament organization"/>
    <property type="evidence" value="ECO:0000318"/>
    <property type="project" value="GO_Central"/>
</dbReference>
<dbReference type="GO" id="GO:0000915">
    <property type="term" value="P:actomyosin contractile ring assembly"/>
    <property type="evidence" value="ECO:0000315"/>
    <property type="project" value="WormBase"/>
</dbReference>
<dbReference type="GO" id="GO:0016477">
    <property type="term" value="P:cell migration"/>
    <property type="evidence" value="ECO:0000318"/>
    <property type="project" value="GO_Central"/>
</dbReference>
<dbReference type="GO" id="GO:0031034">
    <property type="term" value="P:myosin filament assembly"/>
    <property type="evidence" value="ECO:0000315"/>
    <property type="project" value="WormBase"/>
</dbReference>
<dbReference type="GO" id="GO:0014057">
    <property type="term" value="P:positive regulation of acetylcholine secretion, neurotransmission"/>
    <property type="evidence" value="ECO:0000315"/>
    <property type="project" value="WormBase"/>
</dbReference>
<dbReference type="GO" id="GO:0040017">
    <property type="term" value="P:positive regulation of locomotion"/>
    <property type="evidence" value="ECO:0000315"/>
    <property type="project" value="WormBase"/>
</dbReference>
<dbReference type="GO" id="GO:0032956">
    <property type="term" value="P:regulation of actin cytoskeleton organization"/>
    <property type="evidence" value="ECO:0000318"/>
    <property type="project" value="GO_Central"/>
</dbReference>
<dbReference type="GO" id="GO:0032970">
    <property type="term" value="P:regulation of actin filament-based process"/>
    <property type="evidence" value="ECO:0000315"/>
    <property type="project" value="WormBase"/>
</dbReference>
<dbReference type="GO" id="GO:0007165">
    <property type="term" value="P:signal transduction"/>
    <property type="evidence" value="ECO:0000318"/>
    <property type="project" value="GO_Central"/>
</dbReference>
<dbReference type="GO" id="GO:0030241">
    <property type="term" value="P:skeletal muscle myosin thick filament assembly"/>
    <property type="evidence" value="ECO:0000315"/>
    <property type="project" value="WormBase"/>
</dbReference>
<dbReference type="GO" id="GO:0007264">
    <property type="term" value="P:small GTPase-mediated signal transduction"/>
    <property type="evidence" value="ECO:0007669"/>
    <property type="project" value="InterPro"/>
</dbReference>
<dbReference type="CDD" id="cd01870">
    <property type="entry name" value="RhoA_like"/>
    <property type="match status" value="1"/>
</dbReference>
<dbReference type="FunFam" id="3.40.50.300:FF:000095">
    <property type="entry name" value="Rho-related GTP-binding protein RhoC"/>
    <property type="match status" value="1"/>
</dbReference>
<dbReference type="Gene3D" id="3.40.50.300">
    <property type="entry name" value="P-loop containing nucleotide triphosphate hydrolases"/>
    <property type="match status" value="1"/>
</dbReference>
<dbReference type="InterPro" id="IPR027417">
    <property type="entry name" value="P-loop_NTPase"/>
</dbReference>
<dbReference type="InterPro" id="IPR005225">
    <property type="entry name" value="Small_GTP-bd"/>
</dbReference>
<dbReference type="InterPro" id="IPR001806">
    <property type="entry name" value="Small_GTPase"/>
</dbReference>
<dbReference type="InterPro" id="IPR003578">
    <property type="entry name" value="Small_GTPase_Rho"/>
</dbReference>
<dbReference type="NCBIfam" id="TIGR00231">
    <property type="entry name" value="small_GTP"/>
    <property type="match status" value="1"/>
</dbReference>
<dbReference type="PANTHER" id="PTHR24072">
    <property type="entry name" value="RHO FAMILY GTPASE"/>
    <property type="match status" value="1"/>
</dbReference>
<dbReference type="Pfam" id="PF00071">
    <property type="entry name" value="Ras"/>
    <property type="match status" value="1"/>
</dbReference>
<dbReference type="PRINTS" id="PR00449">
    <property type="entry name" value="RASTRNSFRMNG"/>
</dbReference>
<dbReference type="SMART" id="SM00175">
    <property type="entry name" value="RAB"/>
    <property type="match status" value="1"/>
</dbReference>
<dbReference type="SMART" id="SM00173">
    <property type="entry name" value="RAS"/>
    <property type="match status" value="1"/>
</dbReference>
<dbReference type="SMART" id="SM00174">
    <property type="entry name" value="RHO"/>
    <property type="match status" value="1"/>
</dbReference>
<dbReference type="SUPFAM" id="SSF52540">
    <property type="entry name" value="P-loop containing nucleoside triphosphate hydrolases"/>
    <property type="match status" value="1"/>
</dbReference>
<dbReference type="PROSITE" id="PS51420">
    <property type="entry name" value="RHO"/>
    <property type="match status" value="1"/>
</dbReference>
<evidence type="ECO:0000250" key="1"/>
<evidence type="ECO:0000255" key="2"/>
<evidence type="ECO:0000269" key="3">
    <source>
    </source>
</evidence>
<evidence type="ECO:0000269" key="4">
    <source>
    </source>
</evidence>
<evidence type="ECO:0000269" key="5">
    <source>
    </source>
</evidence>
<evidence type="ECO:0000269" key="6">
    <source>
    </source>
</evidence>
<evidence type="ECO:0000269" key="7">
    <source>
    </source>
</evidence>
<evidence type="ECO:0000269" key="8">
    <source>
    </source>
</evidence>
<evidence type="ECO:0000269" key="9">
    <source>
    </source>
</evidence>
<evidence type="ECO:0000269" key="10">
    <source>
    </source>
</evidence>
<evidence type="ECO:0000303" key="11">
    <source>
    </source>
</evidence>
<evidence type="ECO:0000305" key="12"/>
<evidence type="ECO:0000312" key="13">
    <source>
        <dbReference type="WormBase" id="Y51H4A.3a"/>
    </source>
</evidence>
<sequence length="192" mass="21635">MAAIRKKLVIVGDGACGKTCLLIVFSKDQFPDVYVPTVFENYVADIEVDGKQVELALWDTAGQEDYDRLRPLSYPDTDVILMCFSIDSPDSLENIPEKWTPEVRHFCPNVPIILVGNKRDLRSDPQTVRELAKMKQEPVKPEQGRAIAEQIGAFAYLECSAKTKDGIREVFEKATQAALQQKKKKKSKCMIL</sequence>
<reference key="1">
    <citation type="journal article" date="1994" name="J. Biol. Chem.">
        <title>The Caenorhabditis elegans small GTP-binding protein RhoA is enriched in the nerve ring and sensory neurons during larval development.</title>
        <authorList>
            <person name="Chen W."/>
            <person name="Lim L."/>
        </authorList>
    </citation>
    <scope>NUCLEOTIDE SEQUENCE [MRNA]</scope>
    <scope>SUBCELLULAR LOCATION</scope>
    <scope>TISSUE SPECIFICITY</scope>
    <scope>DEVELOPMENTAL STAGE</scope>
    <source>
        <strain>Bristol N2</strain>
    </source>
</reference>
<reference key="2">
    <citation type="journal article" date="1998" name="Science">
        <title>Genome sequence of the nematode C. elegans: a platform for investigating biology.</title>
        <authorList>
            <consortium name="The C. elegans sequencing consortium"/>
        </authorList>
    </citation>
    <scope>NUCLEOTIDE SEQUENCE [LARGE SCALE GENOMIC DNA]</scope>
    <source>
        <strain>Bristol N2</strain>
    </source>
</reference>
<reference key="3">
    <citation type="journal article" date="2001" name="Proc. Natl. Acad. Sci. U.S.A.">
        <title>A RHO GTPase-mediated pathway is required during P cell migration in Caenorhabditis elegans.</title>
        <authorList>
            <person name="Spencer A.G."/>
            <person name="Orita S."/>
            <person name="Malone C.J."/>
            <person name="Han M."/>
        </authorList>
    </citation>
    <scope>FUNCTION</scope>
    <scope>DISRUPTION PHENOTYPE</scope>
    <scope>MUTAGENESIS OF GLY-14 AND THR-19</scope>
</reference>
<reference key="4">
    <citation type="journal article" date="2006" name="Nat. Cell Biol.">
        <title>Sequential functioning of the ECT-2 RhoGEF, RHO-1 and CDC-42 establishes cell polarity in Caenorhabditis elegans embryos.</title>
        <authorList>
            <person name="Motegi F."/>
            <person name="Sugimoto A."/>
        </authorList>
    </citation>
    <scope>FUNCTION</scope>
    <scope>DISRUPTION PHENOTYPE</scope>
</reference>
<reference key="5">
    <citation type="journal article" date="2008" name="J. Mol. Biol.">
        <title>The DH-PH region of the giant protein UNC-89 activates RHO-1 GTPase in Caenorhabditis elegans body wall muscle.</title>
        <authorList>
            <person name="Qadota H."/>
            <person name="Blangy A."/>
            <person name="Xiong G."/>
            <person name="Benian G.M."/>
        </authorList>
    </citation>
    <scope>FUNCTION</scope>
    <scope>ACTIVITY REGULATION</scope>
    <scope>INTERACTION WITH UNC-89</scope>
    <scope>DISRUPTION PHENOTYPE</scope>
</reference>
<reference key="6">
    <citation type="journal article" date="2011" name="PLoS ONE">
        <title>The RHO-1 RhoGTPase modulates fertility and multiple behaviors in adult C. elegans.</title>
        <authorList>
            <person name="McMullan R."/>
            <person name="Nurrish S.J."/>
        </authorList>
    </citation>
    <scope>FUNCTION</scope>
    <scope>MUTAGENESIS OF GLY-14</scope>
</reference>
<reference key="7">
    <citation type="journal article" date="2013" name="Dev. Biol.">
        <title>The TAO kinase KIN-18 regulates contractility and establishment of polarity in the C. elegans embryo.</title>
        <authorList>
            <person name="Spiga F.M."/>
            <person name="Prouteau M."/>
            <person name="Gotta M."/>
        </authorList>
    </citation>
    <scope>SUBCELLULAR LOCATION</scope>
    <scope>DISRUPTION PHENOTYPE</scope>
</reference>
<reference key="8">
    <citation type="journal article" date="2013" name="Dev. Biol.">
        <title>Caenorhabditis elegans anillin (ani-1) regulates neuroblast cytokinesis and epidermal morphogenesis during embryonic development.</title>
        <authorList>
            <person name="Fotopoulos N."/>
            <person name="Wernike D."/>
            <person name="Chen Y."/>
            <person name="Makil N."/>
            <person name="Marte A."/>
            <person name="Piekny A."/>
        </authorList>
    </citation>
    <scope>FUNCTION</scope>
    <scope>SUBCELLULAR LOCATION</scope>
    <scope>DEVELOPMENTAL STAGE</scope>
    <scope>DISRUPTION PHENOTYPE</scope>
</reference>
<reference key="9">
    <citation type="journal article" date="2017" name="Elife">
        <title>NADPH oxidase-mediated redox signaling promotes oxidative stress resistance and longevity through memo-1 in C. elegans.</title>
        <authorList>
            <person name="Ewald C.Y."/>
            <person name="Hourihan J.M."/>
            <person name="Bland M.S."/>
            <person name="Obieglo C."/>
            <person name="Katic I."/>
            <person name="Moronetti Mazzeo L.E."/>
            <person name="Alcedo J."/>
            <person name="Blackwell T.K."/>
            <person name="Hynes N.E."/>
        </authorList>
    </citation>
    <scope>FUNCTION</scope>
    <scope>INTERACTION WITH BLI-3 AND MEMO-1</scope>
    <scope>DISRUPTION PHENOTYPE</scope>
</reference>
<keyword id="KW-0131">Cell cycle</keyword>
<keyword id="KW-0132">Cell division</keyword>
<keyword id="KW-1003">Cell membrane</keyword>
<keyword id="KW-0963">Cytoplasm</keyword>
<keyword id="KW-0206">Cytoskeleton</keyword>
<keyword id="KW-0217">Developmental protein</keyword>
<keyword id="KW-0342">GTP-binding</keyword>
<keyword id="KW-0449">Lipoprotein</keyword>
<keyword id="KW-0472">Membrane</keyword>
<keyword id="KW-0488">Methylation</keyword>
<keyword id="KW-0498">Mitosis</keyword>
<keyword id="KW-0547">Nucleotide-binding</keyword>
<keyword id="KW-0636">Prenylation</keyword>
<keyword id="KW-1185">Reference proteome</keyword>
<comment type="function">
    <text evidence="3 4 5 6 8 9">Required for ventral migration of epidermal cells during ventral enclosure in the embryo and for cell elongation (PubMed:24016757). Also required for ventral migration of P cells during larval development (PubMed:11687661). Involved in asymmetric spindle positioning during anaphase and establishment of cell polarity during embryo development (PubMed:16921365). In adults, involved in regulation of multiple processes including locomotion, pharyngeal pumping, fecundity, ovulation, defecation and body morphology (PubMed:21387015). In body wall muscles, regulates organization of myosin thick filaments downstream of unc-89 (PubMed:18801371). Association with the oxidase bli-3 promotes ROS production and this interaction may be modulated by memo-1, in order to control the oxidative stress response and longevity (PubMed:28085666).</text>
</comment>
<comment type="activity regulation">
    <text evidence="5">GTP hydrolysis is stimulated by unc-89.</text>
</comment>
<comment type="subunit">
    <text evidence="5 9">May interact with unc-89 (via DN and PH domains) (PubMed:18801371). Interacts with bli-3 and memo-1 (PubMed:28085666).</text>
</comment>
<comment type="subcellular location">
    <subcellularLocation>
        <location evidence="10">Cell membrane</location>
        <topology evidence="12">Lipid-anchor</topology>
        <orientation evidence="12">Cytoplasmic side</orientation>
    </subcellularLocation>
    <subcellularLocation>
        <location>Cytoplasm</location>
    </subcellularLocation>
    <subcellularLocation>
        <location evidence="7 8 10">Cytoplasm</location>
        <location evidence="7 8 10">Cytoskeleton</location>
    </subcellularLocation>
    <subcellularLocation>
        <location evidence="7">Cytoplasm</location>
        <location evidence="7">Cell cortex</location>
    </subcellularLocation>
    <text evidence="7 10">Associated with the membrane and the cytoskeleton throughout development (PubMed:7798239). Enriched at the anterior cortex in embryos; localization to the anterior cortex requires kin-18 (PubMed:23064028).</text>
</comment>
<comment type="tissue specificity">
    <text evidence="10">In larvae and adults, enriched at the tip of the head where the anterior sensory organ is located and in the pharyngeal nerve ring (at protein level). In embryos, enriched at the boundaries of dorsal cells undergoing intercalation, ventral enclosure and elongation.</text>
</comment>
<comment type="developmental stage">
    <text evidence="8 10">Highest expression during larval development with a peak at L3 and lower levels in the embryo and adult (at protein level).</text>
</comment>
<comment type="disruption phenotype">
    <text evidence="3 4 5 7 8 9">RNAi-mediated knockdown predominantly results in embryonic arrest with surviving embryos developing elongation-defective uncoordinated kinky larvae (PubMed:11687661, PubMed:24016757). Defective ventral migration of P cells leading to defective gonad development (PubMed:11687661). Defective establishment of anterior-posterior cell polarity in one-cell embryos (PubMed:16921365). Abolished cortical contractility in early embryos (PubMed:23064028). RNAi-mediated knockdown results in disorganized myosin thick filaments in the body wall muscles of the few surviving adults, which is characterized by the formation of abnormal myosin heavy chain myo-3 aggregates, V-shaped crossing of A-bands and areas in which the myosin heavy chain is missing (PubMed:18801371). RNAi-mediated knockdown suppresses reactive oxygen species induction and longevity in the memo-1 mutant (PubMed:28085666). Double RNAi-mediated knockdown with memo-1 eliminates the resistance to oxidative stress in the memo-1 single mutant (PubMed:28085666).</text>
</comment>
<comment type="similarity">
    <text evidence="12">Belongs to the small GTPase superfamily. Rho family.</text>
</comment>
<proteinExistence type="evidence at protein level"/>
<feature type="chain" id="PRO_0000198884" description="Ras-like GTP-binding protein rhoA">
    <location>
        <begin position="1"/>
        <end position="189"/>
    </location>
</feature>
<feature type="propeptide" id="PRO_0000281237" description="Removed in mature form" evidence="1">
    <location>
        <begin position="190"/>
        <end position="192"/>
    </location>
</feature>
<feature type="short sequence motif" description="Effector region" evidence="2">
    <location>
        <begin position="34"/>
        <end position="42"/>
    </location>
</feature>
<feature type="binding site" evidence="1">
    <location>
        <begin position="12"/>
        <end position="19"/>
    </location>
    <ligand>
        <name>GTP</name>
        <dbReference type="ChEBI" id="CHEBI:37565"/>
    </ligand>
</feature>
<feature type="binding site" evidence="1">
    <location>
        <begin position="59"/>
        <end position="63"/>
    </location>
    <ligand>
        <name>GTP</name>
        <dbReference type="ChEBI" id="CHEBI:37565"/>
    </ligand>
</feature>
<feature type="binding site" evidence="1">
    <location>
        <begin position="117"/>
        <end position="120"/>
    </location>
    <ligand>
        <name>GTP</name>
        <dbReference type="ChEBI" id="CHEBI:37565"/>
    </ligand>
</feature>
<feature type="modified residue" description="Cysteine methyl ester" evidence="1">
    <location>
        <position position="189"/>
    </location>
</feature>
<feature type="lipid moiety-binding region" description="S-geranylgeranyl cysteine" evidence="1">
    <location>
        <position position="189"/>
    </location>
</feature>
<feature type="mutagenesis site" description="Constitutively active. Normal P cell migration. No effect on viability or fertility." evidence="3 6">
    <original>G</original>
    <variation>V</variation>
    <location>
        <position position="14"/>
    </location>
</feature>
<feature type="mutagenesis site" description="Dominant negative. Defective ventral migration of P cells leading to defective gonad development. Severely uncoordinated." evidence="3">
    <original>T</original>
    <variation>N</variation>
    <location>
        <position position="19"/>
    </location>
</feature>
<protein>
    <recommendedName>
        <fullName>Ras-like GTP-binding protein rhoA</fullName>
    </recommendedName>
</protein>
<organism>
    <name type="scientific">Caenorhabditis elegans</name>
    <dbReference type="NCBI Taxonomy" id="6239"/>
    <lineage>
        <taxon>Eukaryota</taxon>
        <taxon>Metazoa</taxon>
        <taxon>Ecdysozoa</taxon>
        <taxon>Nematoda</taxon>
        <taxon>Chromadorea</taxon>
        <taxon>Rhabditida</taxon>
        <taxon>Rhabditina</taxon>
        <taxon>Rhabditomorpha</taxon>
        <taxon>Rhabditoidea</taxon>
        <taxon>Rhabditidae</taxon>
        <taxon>Peloderinae</taxon>
        <taxon>Caenorhabditis</taxon>
    </lineage>
</organism>
<gene>
    <name evidence="13" type="primary">rho-1</name>
    <name evidence="11" type="synonym">rhoa</name>
    <name evidence="13" type="ORF">Y51H4A.3</name>
</gene>
<accession>Q22038</accession>